<feature type="chain" id="PRO_0000373090" description="DNA ligase">
    <location>
        <begin position="1"/>
        <end position="419"/>
    </location>
</feature>
<feature type="region of interest" description="NTD" evidence="1">
    <location>
        <begin position="1"/>
        <end position="120"/>
    </location>
</feature>
<feature type="region of interest" description="AD domain" evidence="1">
    <location>
        <begin position="121"/>
        <end position="317"/>
    </location>
</feature>
<feature type="region of interest" description="OB domain" evidence="1">
    <location>
        <begin position="318"/>
        <end position="419"/>
    </location>
</feature>
<feature type="active site" description="N6-AMP-lysine intermediate" evidence="2">
    <location>
        <position position="151"/>
    </location>
</feature>
<keyword id="KW-0067">ATP-binding</keyword>
<keyword id="KW-0131">Cell cycle</keyword>
<keyword id="KW-0132">Cell division</keyword>
<keyword id="KW-0227">DNA damage</keyword>
<keyword id="KW-0233">DNA recombination</keyword>
<keyword id="KW-0234">DNA repair</keyword>
<keyword id="KW-0235">DNA replication</keyword>
<keyword id="KW-0436">Ligase</keyword>
<keyword id="KW-0547">Nucleotide-binding</keyword>
<keyword id="KW-0946">Virion</keyword>
<gene>
    <name type="ordered locus">War-110</name>
</gene>
<accession>P0C991</accession>
<sequence>MLNHFPGHCSNNIFCFPPIESETKSGKKASWIICVQVVQHNTIIPITDEMFSTDVKDAVAEIFTKFFVEEGTVRISKMTRVTEGKNLGKKNATTVVHQAFKDALSKYNRHARQKRGAHTNTGMIPPMLVKYFNIIPKTFFEEETDPIVQRKRNGVRAVACQQGDGSILLYSRTEKEFLGLDNIKKELKQLYLFIDVRVYLDGELYLHRKPLQWIAGQANAKTDSSELHFYVFDCFWSDQLQMPSNKRQQLLTNIFKQKEDLTFIHQVENFSVKNEDEALRLKAQFIKEGYEGAIVRNANGPYEPGYNNYHSAHLAKLKPLLDAEFILVDYTQGKKGKDLGAILWVCELPNKKRFVVTPKHLTYADRYALFQKLTPALFKKHLYGKELTVEYAELSPKTGIPLQARAVGFREPINVLEII</sequence>
<evidence type="ECO:0000250" key="1">
    <source>
        <dbReference type="UniProtKB" id="P35970"/>
    </source>
</evidence>
<evidence type="ECO:0000255" key="2">
    <source>
        <dbReference type="PROSITE-ProRule" id="PRU10135"/>
    </source>
</evidence>
<evidence type="ECO:0000305" key="3"/>
<comment type="function">
    <text evidence="1">Very low-fidelity DNA ligase that seals nicks in double-stranded DNA during DNA repair (By similarity). Together with the viral repair DNA polymerase X, fills the single nucleotide gaps generated by the AP endonuclease (By similarity). It is not essential for viral replication and recombination (By similarity). Displays a very low adenylation activity towards DNA with 3'-dideoxy- or 3'-amino-terminated nicks compared to regular nick DNA (By similarity).</text>
</comment>
<comment type="catalytic activity">
    <reaction evidence="2">
        <text>ATP + (deoxyribonucleotide)n-3'-hydroxyl + 5'-phospho-(deoxyribonucleotide)m = (deoxyribonucleotide)n+m + AMP + diphosphate.</text>
        <dbReference type="EC" id="6.5.1.1"/>
    </reaction>
</comment>
<comment type="subcellular location">
    <subcellularLocation>
        <location evidence="1">Virion</location>
    </subcellularLocation>
    <text evidence="1">Found in association with the viral nucleoid.</text>
</comment>
<comment type="domain">
    <text evidence="1">The N-terminus domain (NTD) plays a critical role in DNA-binding, catalytic complex assembly and catalysis.</text>
</comment>
<comment type="miscellaneous">
    <text>Consistent with its intracellular location, ASFV encodes its own replicative DNA polymerase and three base excision repair enzymes: a class II AP endonuclease, the repair polymerase Pol X, and an ATP-dependent DNA ligase.</text>
</comment>
<comment type="similarity">
    <text evidence="3">Belongs to the ATP-dependent DNA ligase family.</text>
</comment>
<organismHost>
    <name type="scientific">Ornithodoros</name>
    <name type="common">relapsing fever ticks</name>
    <dbReference type="NCBI Taxonomy" id="6937"/>
</organismHost>
<organismHost>
    <name type="scientific">Phacochoerus aethiopicus</name>
    <name type="common">Warthog</name>
    <dbReference type="NCBI Taxonomy" id="85517"/>
</organismHost>
<organismHost>
    <name type="scientific">Phacochoerus africanus</name>
    <name type="common">Warthog</name>
    <dbReference type="NCBI Taxonomy" id="41426"/>
</organismHost>
<organismHost>
    <name type="scientific">Potamochoerus larvatus</name>
    <name type="common">Bushpig</name>
    <dbReference type="NCBI Taxonomy" id="273792"/>
</organismHost>
<organismHost>
    <name type="scientific">Sus scrofa</name>
    <name type="common">Pig</name>
    <dbReference type="NCBI Taxonomy" id="9823"/>
</organismHost>
<name>DNLI_ASFWA</name>
<proteinExistence type="inferred from homology"/>
<reference key="1">
    <citation type="submission" date="2003-03" db="EMBL/GenBank/DDBJ databases">
        <title>African swine fever virus genomes.</title>
        <authorList>
            <person name="Kutish G.F."/>
            <person name="Rock D.L."/>
        </authorList>
    </citation>
    <scope>NUCLEOTIDE SEQUENCE [LARGE SCALE GENOMIC DNA]</scope>
</reference>
<dbReference type="EC" id="6.5.1.1" evidence="2"/>
<dbReference type="EMBL" id="AY261366">
    <property type="status" value="NOT_ANNOTATED_CDS"/>
    <property type="molecule type" value="Genomic_DNA"/>
</dbReference>
<dbReference type="SMR" id="P0C991"/>
<dbReference type="Proteomes" id="UP000000858">
    <property type="component" value="Segment"/>
</dbReference>
<dbReference type="GO" id="GO:0044423">
    <property type="term" value="C:virion component"/>
    <property type="evidence" value="ECO:0007669"/>
    <property type="project" value="UniProtKB-KW"/>
</dbReference>
<dbReference type="GO" id="GO:0005524">
    <property type="term" value="F:ATP binding"/>
    <property type="evidence" value="ECO:0007669"/>
    <property type="project" value="UniProtKB-KW"/>
</dbReference>
<dbReference type="GO" id="GO:0003910">
    <property type="term" value="F:DNA ligase (ATP) activity"/>
    <property type="evidence" value="ECO:0007669"/>
    <property type="project" value="UniProtKB-EC"/>
</dbReference>
<dbReference type="GO" id="GO:0051301">
    <property type="term" value="P:cell division"/>
    <property type="evidence" value="ECO:0007669"/>
    <property type="project" value="UniProtKB-KW"/>
</dbReference>
<dbReference type="GO" id="GO:0006310">
    <property type="term" value="P:DNA recombination"/>
    <property type="evidence" value="ECO:0007669"/>
    <property type="project" value="UniProtKB-KW"/>
</dbReference>
<dbReference type="GO" id="GO:0006281">
    <property type="term" value="P:DNA repair"/>
    <property type="evidence" value="ECO:0007669"/>
    <property type="project" value="UniProtKB-KW"/>
</dbReference>
<dbReference type="GO" id="GO:0006260">
    <property type="term" value="P:DNA replication"/>
    <property type="evidence" value="ECO:0007669"/>
    <property type="project" value="UniProtKB-KW"/>
</dbReference>
<dbReference type="Gene3D" id="3.30.470.30">
    <property type="entry name" value="DNA ligase/mRNA capping enzyme"/>
    <property type="match status" value="1"/>
</dbReference>
<dbReference type="InterPro" id="IPR012310">
    <property type="entry name" value="DNA_ligase_ATP-dep_cent"/>
</dbReference>
<dbReference type="InterPro" id="IPR016059">
    <property type="entry name" value="DNA_ligase_ATP-dep_CS"/>
</dbReference>
<dbReference type="InterPro" id="IPR012340">
    <property type="entry name" value="NA-bd_OB-fold"/>
</dbReference>
<dbReference type="InterPro" id="IPR050326">
    <property type="entry name" value="NAD_dep_DNA_ligaseB"/>
</dbReference>
<dbReference type="PANTHER" id="PTHR47810">
    <property type="entry name" value="DNA LIGASE"/>
    <property type="match status" value="1"/>
</dbReference>
<dbReference type="PANTHER" id="PTHR47810:SF5">
    <property type="entry name" value="LIGASE, PUTATIVE-RELATED"/>
    <property type="match status" value="1"/>
</dbReference>
<dbReference type="Pfam" id="PF01068">
    <property type="entry name" value="DNA_ligase_A_M"/>
    <property type="match status" value="1"/>
</dbReference>
<dbReference type="SUPFAM" id="SSF56091">
    <property type="entry name" value="DNA ligase/mRNA capping enzyme, catalytic domain"/>
    <property type="match status" value="1"/>
</dbReference>
<dbReference type="SUPFAM" id="SSF50249">
    <property type="entry name" value="Nucleic acid-binding proteins"/>
    <property type="match status" value="1"/>
</dbReference>
<dbReference type="PROSITE" id="PS00697">
    <property type="entry name" value="DNA_LIGASE_A1"/>
    <property type="match status" value="1"/>
</dbReference>
<dbReference type="PROSITE" id="PS00333">
    <property type="entry name" value="DNA_LIGASE_A2"/>
    <property type="match status" value="1"/>
</dbReference>
<dbReference type="PROSITE" id="PS50160">
    <property type="entry name" value="DNA_LIGASE_A3"/>
    <property type="match status" value="1"/>
</dbReference>
<protein>
    <recommendedName>
        <fullName evidence="1">DNA ligase</fullName>
        <ecNumber evidence="2">6.5.1.1</ecNumber>
    </recommendedName>
    <alternativeName>
        <fullName>Polydeoxyribonucleotide synthase [ATP]</fullName>
    </alternativeName>
</protein>
<organism>
    <name type="scientific">African swine fever virus (isolate Warthog/Namibia/Wart80/1980)</name>
    <name type="common">ASFV</name>
    <dbReference type="NCBI Taxonomy" id="561444"/>
    <lineage>
        <taxon>Viruses</taxon>
        <taxon>Varidnaviria</taxon>
        <taxon>Bamfordvirae</taxon>
        <taxon>Nucleocytoviricota</taxon>
        <taxon>Pokkesviricetes</taxon>
        <taxon>Asfuvirales</taxon>
        <taxon>Asfarviridae</taxon>
        <taxon>Asfivirus</taxon>
        <taxon>African swine fever virus</taxon>
    </lineage>
</organism>